<comment type="function">
    <text evidence="3 8 9">Oxidoreductase; part of the gene cluster that mediates the biosynthesis of aflatoxins, a group of polyketide-derived furanocoumarins, and part of the most toxic and carcinogenic compounds among the known mycotoxins (PubMed:15006741, PubMed:15094053, PubMed:16332900). The four major aflatoxins produced by A.parasiticus are aflatoxin B1 (AFB1), aflatoxin B2 (AFB2), aflatoxin G1 (AFG1) and aflatoxin G2 (AFG2) (PubMed:15006741). Within the aflatoxin pathway, the oxidoreductase aflY seems to be involved in the conversion of versicolorin A (VERA) to demethylsterigmatocystin (DMST), through probable Baeyer-Villiger oxidation required for the formation of the xanthone ring (PubMed:16332900). The biosynthesis of aflatoxins begins with the norsolorinic acid synthase aflC that combines a hexanoyl starter unit produced by the fatty acid synthase aflA/aflB and 7 malonyl-CoA extender units to synthesize the precursor NOR. The second step is the conversion of NOR to averantin and requires the norsolorinic acid ketoreductase aflD, which catalyzes the dehydration of norsolorinic acid to form (1'S)-averantin. The norsolorinic acid reductases aflE and aflF may also play a role in the conversion of NOR to AVN. The cytochrome P450 monooxygenase aflG then catalyzes the hydroxylation of AVN to 5'hydroxyaverantin (HAVN). The next step is performed by the 5'-hydroxyaverantin dehydrogenase aflH that transforms HAVN to 5'-oxoaverantin (OAVN) which is further converted to averufin (AVF) by aflK that plays a dual role in the pathway, as a 5'-oxoaverantin cyclase that mediates conversion of 5'-oxoaverantin, as well as a versicolorin B synthase in a later step in the pathway. The averufin oxidase aflI catalyzes the conversion of AVF to versiconal hemiacetal acetate (VHA). VHA is then the substrate for the versiconal hemiacetal acetate esterase aflJ to yield versiconal (VAL). Versicolorin B synthase aflK then converts VAL to versicolorin B (VERB) by closing the bisfuran ring of aflatoxin which is required for DNA-binding, thus giving to aflatoxin its activity as a mutagen. Then, the activity of the versicolorin B desaturase aflL leads to versicolorin A (VERA). A branch point starts from VERB since it can also be converted to dihydrodemethylsterigmatocystin (DMDHST), probably also by aflL, VERA being a precursor for aflatoxins B1 and G1, and DMDHST for aflatoxins B2 and G2. Next, the versicolorin reductase aflM and the cytochrome P450 monooxygenase aflN are involved in conversion of VERA to demethylsterigmatocystin (DMST). AflX and aflY seem also involved in this step, through probable aflX-mediated epoxide ring-opening step following versicolorin A oxidation and aflY-mediated Baeyer-Villiger oxidation required for the formation of the xanthone ring. The methyltransferase aflO then leads to the modification of DMST to sterigmatocystin (ST), and of DMDHST to dihydrosterigmatocystin (DHST). Both ST and DHST are then substrates of the O-methyltransferase aflP to yield O-methylsterigmatocystin (OMST) and dihydro-O-methylsterigmatocystin (DHOMST), respectively. Finally OMST is converted to aflatoxins B1 and G1, and DHOMST to aflatoxins B2 and G2, via the action of several enzymes including O-methylsterigmatocystin oxidoreductase aflQ, the cytochrome P450 monooxygenase aflU, but also the NADH-dependent flavin oxidoreductase nadA which is specifically required for the synthesis of AFG1 (PubMed:15006741).</text>
</comment>
<comment type="pathway">
    <text evidence="2 8">Mycotoxin biosynthesis; aflatoxin biosynthesis.</text>
</comment>
<comment type="disruption phenotype">
    <text evidence="3">Leads to the accumulation of versicolorin A (PubMed:16332900).</text>
</comment>
<comment type="similarity">
    <text evidence="7">Belongs to the questin oxidase family.</text>
</comment>
<sequence length="495" mass="55555">MGSHAPAVAGKPDPKKGPYQATPWNIQLSATDTPGFTHVGNLERRSADRASDLVMNNHSKFHTFHDEIVGFHNHISHHVLTLWALGATPDEMQAAYDFNKPFQLLTYYNDPSVNIKLRDPEFFRQGLGNFELYGDYVRFFQAEVAAKGTQTVLHDYLFKGDTLTEDLLARLFSGFLHPLINLGFALEFQQPFLAAECLASTCMHPPYPAEFLTATEQHVECNGRPRSLPILSIAEGMRLDPVVATAVGPEDGNNRIADALLKRALKELIPHLSYFQVEPTEHDLARKTAEILQASAYICGAAQHPRKVEALDFVMLHSLTAAVFFPTIIKQEWISIETRARLLEWKGRSDLITYAALGCPKLYPDRITGYQPKQAATGWSDVVQRARVYQDDGHACKVIRALMCAENVCQPFEGEEGFPLKKADFLTVAHMTMDSVERMSDPNWVRQTEKVKQMSAQGRGQHSQVSAIMLRWVRWCGTEGAWDDFPDLEELSPSA</sequence>
<name>AFLY_ASPPU</name>
<reference key="1">
    <citation type="journal article" date="2004" name="FEBS Lett.">
        <title>Completed sequence of aflatoxin pathway gene cluster in Aspergillus parasiticus.</title>
        <authorList>
            <person name="Yu J."/>
            <person name="Bhatnagar D."/>
            <person name="Cleveland T.E."/>
        </authorList>
    </citation>
    <scope>NUCLEOTIDE SEQUENCE [GENOMIC DNA]</scope>
    <scope>FUNCTION</scope>
    <scope>PATHWAY</scope>
    <source>
        <strain>ATCC 56775 / NRRL 5862 / SRRC 143 / SU-1</strain>
    </source>
</reference>
<reference key="2">
    <citation type="submission" date="2015-02" db="EMBL/GenBank/DDBJ databases">
        <title>Draft genome sequence of Aspergillus parasiticus SU-1.</title>
        <authorList>
            <person name="Yu J."/>
            <person name="Fedorova N."/>
            <person name="Yin Y."/>
            <person name="Losada L."/>
            <person name="Zafar N."/>
            <person name="Taujale R."/>
            <person name="Ehrlich K.C."/>
            <person name="Bhatnagar D."/>
            <person name="Cleveland T.E."/>
            <person name="Bennett J.W."/>
            <person name="Nierman W.C."/>
        </authorList>
    </citation>
    <scope>NUCLEOTIDE SEQUENCE [LARGE SCALE GENOMIC DNA]</scope>
    <source>
        <strain>ATCC 56775 / NRRL 5862 / SRRC 143 / SU-1</strain>
    </source>
</reference>
<reference key="3">
    <citation type="journal article" date="2004" name="Appl. Environ. Microbiol.">
        <title>Clustered pathway genes in aflatoxin biosynthesis.</title>
        <authorList>
            <person name="Yu J."/>
            <person name="Chang P.K."/>
            <person name="Ehrlich K.C."/>
            <person name="Cary J.W."/>
            <person name="Bhatnagar D."/>
            <person name="Cleveland T.E."/>
            <person name="Payne G.A."/>
            <person name="Linz J.E."/>
            <person name="Woloshuk C.P."/>
            <person name="Bennett J.W."/>
        </authorList>
    </citation>
    <scope>FUNCTION</scope>
    <scope>PATHWAY</scope>
    <scope>NOMENCLATURE</scope>
    <source>
        <strain>ATCC 56775 / NRRL 5862 / SRRC 143 / SU-1</strain>
    </source>
</reference>
<reference key="4">
    <citation type="journal article" date="2005" name="Appl. Environ. Microbiol.">
        <title>An aflatoxin biosynthesis cluster gene encodes a novel oxidase required for conversion of versicolorin a to sterigmatocystin.</title>
        <authorList>
            <person name="Ehrlich K.C."/>
            <person name="Montalbano B."/>
            <person name="Boue S.M."/>
            <person name="Bhatnagar D."/>
        </authorList>
    </citation>
    <scope>FUNCTION</scope>
    <scope>DISRUPTION PHENOTYPE</scope>
    <source>
        <strain>ATCC 56775 / NRRL 5862 / SRRC 143 / SU-1</strain>
    </source>
</reference>
<proteinExistence type="inferred from homology"/>
<dbReference type="EC" id="1.-.-.-" evidence="10"/>
<dbReference type="EMBL" id="AY371490">
    <property type="protein sequence ID" value="AAS66025.1"/>
    <property type="molecule type" value="Genomic_DNA"/>
</dbReference>
<dbReference type="EMBL" id="JZEE01000729">
    <property type="protein sequence ID" value="KJK60766.1"/>
    <property type="molecule type" value="Genomic_DNA"/>
</dbReference>
<dbReference type="SMR" id="Q6UEF1"/>
<dbReference type="STRING" id="1403190.Q6UEF1"/>
<dbReference type="OrthoDB" id="10004862at2759"/>
<dbReference type="BioCyc" id="MetaCyc:MONOMER-21287"/>
<dbReference type="UniPathway" id="UPA00287"/>
<dbReference type="Proteomes" id="UP000033540">
    <property type="component" value="Unassembled WGS sequence"/>
</dbReference>
<dbReference type="GO" id="GO:0016491">
    <property type="term" value="F:oxidoreductase activity"/>
    <property type="evidence" value="ECO:0000314"/>
    <property type="project" value="UniProtKB"/>
</dbReference>
<dbReference type="GO" id="GO:0045122">
    <property type="term" value="P:aflatoxin biosynthetic process"/>
    <property type="evidence" value="ECO:0000315"/>
    <property type="project" value="UniProtKB"/>
</dbReference>
<dbReference type="InterPro" id="IPR025337">
    <property type="entry name" value="Questin_oxidase-like"/>
</dbReference>
<dbReference type="PANTHER" id="PTHR35870">
    <property type="entry name" value="PROTEIN, PUTATIVE (AFU_ORTHOLOGUE AFUA_5G03330)-RELATED"/>
    <property type="match status" value="1"/>
</dbReference>
<dbReference type="PANTHER" id="PTHR35870:SF1">
    <property type="entry name" value="PROTEIN, PUTATIVE (AFU_ORTHOLOGUE AFUA_5G03330)-RELATED"/>
    <property type="match status" value="1"/>
</dbReference>
<dbReference type="Pfam" id="PF14027">
    <property type="entry name" value="Questin_oxidase"/>
    <property type="match status" value="1"/>
</dbReference>
<keyword id="KW-0560">Oxidoreductase</keyword>
<keyword id="KW-1185">Reference proteome</keyword>
<accession>Q6UEF1</accession>
<accession>A0A0F0I0Q2</accession>
<evidence type="ECO:0000256" key="1">
    <source>
        <dbReference type="SAM" id="MobiDB-lite"/>
    </source>
</evidence>
<evidence type="ECO:0000269" key="2">
    <source>
    </source>
</evidence>
<evidence type="ECO:0000269" key="3">
    <source>
    </source>
</evidence>
<evidence type="ECO:0000303" key="4">
    <source>
    </source>
</evidence>
<evidence type="ECO:0000303" key="5">
    <source>
    </source>
</evidence>
<evidence type="ECO:0000303" key="6">
    <source>
    </source>
</evidence>
<evidence type="ECO:0000305" key="7"/>
<evidence type="ECO:0000305" key="8">
    <source>
    </source>
</evidence>
<evidence type="ECO:0000305" key="9">
    <source>
    </source>
</evidence>
<evidence type="ECO:0000305" key="10">
    <source>
    </source>
</evidence>
<protein>
    <recommendedName>
        <fullName evidence="6">Oxidoreductase AflY</fullName>
        <ecNumber evidence="10">1.-.-.-</ecNumber>
    </recommendedName>
    <alternativeName>
        <fullName evidence="6">Aflatoxin biosynthesis protein Y</fullName>
    </alternativeName>
</protein>
<gene>
    <name evidence="4" type="primary">aflY</name>
    <name evidence="5" type="synonym">hypA</name>
    <name type="ORF">P875_00053033</name>
</gene>
<organism>
    <name type="scientific">Aspergillus parasiticus (strain ATCC 56775 / NRRL 5862 / SRRC 143 / SU-1)</name>
    <dbReference type="NCBI Taxonomy" id="1403190"/>
    <lineage>
        <taxon>Eukaryota</taxon>
        <taxon>Fungi</taxon>
        <taxon>Dikarya</taxon>
        <taxon>Ascomycota</taxon>
        <taxon>Pezizomycotina</taxon>
        <taxon>Eurotiomycetes</taxon>
        <taxon>Eurotiomycetidae</taxon>
        <taxon>Eurotiales</taxon>
        <taxon>Aspergillaceae</taxon>
        <taxon>Aspergillus</taxon>
        <taxon>Aspergillus subgen. Circumdati</taxon>
    </lineage>
</organism>
<feature type="chain" id="PRO_0000424169" description="Oxidoreductase AflY">
    <location>
        <begin position="1"/>
        <end position="495"/>
    </location>
</feature>
<feature type="region of interest" description="Disordered" evidence="1">
    <location>
        <begin position="1"/>
        <end position="22"/>
    </location>
</feature>